<evidence type="ECO:0000255" key="1">
    <source>
        <dbReference type="HAMAP-Rule" id="MF_00202"/>
    </source>
</evidence>
<dbReference type="EC" id="5.3.3.2" evidence="1"/>
<dbReference type="EMBL" id="CR555308">
    <property type="protein sequence ID" value="CAI10599.1"/>
    <property type="molecule type" value="Genomic_DNA"/>
</dbReference>
<dbReference type="RefSeq" id="WP_011255022.1">
    <property type="nucleotide sequence ID" value="NC_006824.1"/>
</dbReference>
<dbReference type="SMR" id="Q5NWG5"/>
<dbReference type="KEGG" id="eba:p2A143"/>
<dbReference type="eggNOG" id="COG1443">
    <property type="taxonomic scope" value="Bacteria"/>
</dbReference>
<dbReference type="HOGENOM" id="CLU_060552_2_1_4"/>
<dbReference type="OrthoDB" id="9809458at2"/>
<dbReference type="UniPathway" id="UPA00059">
    <property type="reaction ID" value="UER00104"/>
</dbReference>
<dbReference type="Proteomes" id="UP000006552">
    <property type="component" value="Plasmid pAzo2"/>
</dbReference>
<dbReference type="GO" id="GO:0005737">
    <property type="term" value="C:cytoplasm"/>
    <property type="evidence" value="ECO:0007669"/>
    <property type="project" value="UniProtKB-SubCell"/>
</dbReference>
<dbReference type="GO" id="GO:0004452">
    <property type="term" value="F:isopentenyl-diphosphate delta-isomerase activity"/>
    <property type="evidence" value="ECO:0007669"/>
    <property type="project" value="UniProtKB-UniRule"/>
</dbReference>
<dbReference type="GO" id="GO:0046872">
    <property type="term" value="F:metal ion binding"/>
    <property type="evidence" value="ECO:0007669"/>
    <property type="project" value="UniProtKB-KW"/>
</dbReference>
<dbReference type="GO" id="GO:0050992">
    <property type="term" value="P:dimethylallyl diphosphate biosynthetic process"/>
    <property type="evidence" value="ECO:0007669"/>
    <property type="project" value="UniProtKB-UniRule"/>
</dbReference>
<dbReference type="GO" id="GO:0009240">
    <property type="term" value="P:isopentenyl diphosphate biosynthetic process"/>
    <property type="evidence" value="ECO:0007669"/>
    <property type="project" value="TreeGrafter"/>
</dbReference>
<dbReference type="CDD" id="cd02885">
    <property type="entry name" value="NUDIX_IPP_Isomerase"/>
    <property type="match status" value="1"/>
</dbReference>
<dbReference type="Gene3D" id="3.90.79.10">
    <property type="entry name" value="Nucleoside Triphosphate Pyrophosphohydrolase"/>
    <property type="match status" value="1"/>
</dbReference>
<dbReference type="HAMAP" id="MF_00202">
    <property type="entry name" value="Idi"/>
    <property type="match status" value="1"/>
</dbReference>
<dbReference type="InterPro" id="IPR056375">
    <property type="entry name" value="Idi_bact"/>
</dbReference>
<dbReference type="InterPro" id="IPR011876">
    <property type="entry name" value="IsopentenylPP_isomerase_typ1"/>
</dbReference>
<dbReference type="InterPro" id="IPR015797">
    <property type="entry name" value="NUDIX_hydrolase-like_dom_sf"/>
</dbReference>
<dbReference type="InterPro" id="IPR000086">
    <property type="entry name" value="NUDIX_hydrolase_dom"/>
</dbReference>
<dbReference type="NCBIfam" id="TIGR02150">
    <property type="entry name" value="IPP_isom_1"/>
    <property type="match status" value="1"/>
</dbReference>
<dbReference type="NCBIfam" id="NF002995">
    <property type="entry name" value="PRK03759.1"/>
    <property type="match status" value="1"/>
</dbReference>
<dbReference type="PANTHER" id="PTHR10885">
    <property type="entry name" value="ISOPENTENYL-DIPHOSPHATE DELTA-ISOMERASE"/>
    <property type="match status" value="1"/>
</dbReference>
<dbReference type="PANTHER" id="PTHR10885:SF0">
    <property type="entry name" value="ISOPENTENYL-DIPHOSPHATE DELTA-ISOMERASE"/>
    <property type="match status" value="1"/>
</dbReference>
<dbReference type="Pfam" id="PF00293">
    <property type="entry name" value="NUDIX"/>
    <property type="match status" value="1"/>
</dbReference>
<dbReference type="PIRSF" id="PIRSF018427">
    <property type="entry name" value="Isopntndiph_ism"/>
    <property type="match status" value="1"/>
</dbReference>
<dbReference type="SUPFAM" id="SSF55811">
    <property type="entry name" value="Nudix"/>
    <property type="match status" value="1"/>
</dbReference>
<dbReference type="PROSITE" id="PS51462">
    <property type="entry name" value="NUDIX"/>
    <property type="match status" value="1"/>
</dbReference>
<gene>
    <name evidence="1" type="primary">idi2</name>
    <name type="ordered locus">AZOSEC00720</name>
    <name type="ORF">p2A143</name>
</gene>
<protein>
    <recommendedName>
        <fullName evidence="1">Isopentenyl-diphosphate Delta-isomerase 2</fullName>
        <shortName evidence="1">IPP isomerase 2</shortName>
        <ecNumber evidence="1">5.3.3.2</ecNumber>
    </recommendedName>
    <alternativeName>
        <fullName evidence="1">IPP:DMAPP isomerase 2</fullName>
    </alternativeName>
    <alternativeName>
        <fullName evidence="1">Isopentenyl pyrophosphate isomerase 2</fullName>
    </alternativeName>
</protein>
<proteinExistence type="inferred from homology"/>
<comment type="function">
    <text evidence="1">Catalyzes the 1,3-allylic rearrangement of the homoallylic substrate isopentenyl (IPP) to its highly electrophilic allylic isomer, dimethylallyl diphosphate (DMAPP).</text>
</comment>
<comment type="catalytic activity">
    <reaction evidence="1">
        <text>isopentenyl diphosphate = dimethylallyl diphosphate</text>
        <dbReference type="Rhea" id="RHEA:23284"/>
        <dbReference type="ChEBI" id="CHEBI:57623"/>
        <dbReference type="ChEBI" id="CHEBI:128769"/>
        <dbReference type="EC" id="5.3.3.2"/>
    </reaction>
</comment>
<comment type="cofactor">
    <cofactor evidence="1">
        <name>Mg(2+)</name>
        <dbReference type="ChEBI" id="CHEBI:18420"/>
    </cofactor>
    <text evidence="1">Binds 1 Mg(2+) ion per subunit. The magnesium ion binds only when substrate is bound.</text>
</comment>
<comment type="cofactor">
    <cofactor evidence="1">
        <name>Mn(2+)</name>
        <dbReference type="ChEBI" id="CHEBI:29035"/>
    </cofactor>
    <text evidence="1">Binds 1 Mn(2+) ion per subunit.</text>
</comment>
<comment type="pathway">
    <text evidence="1">Isoprenoid biosynthesis; dimethylallyl diphosphate biosynthesis; dimethylallyl diphosphate from isopentenyl diphosphate: step 1/1.</text>
</comment>
<comment type="subcellular location">
    <subcellularLocation>
        <location evidence="1">Cytoplasm</location>
    </subcellularLocation>
</comment>
<comment type="similarity">
    <text evidence="1">Belongs to the IPP isomerase type 1 family.</text>
</comment>
<keyword id="KW-0963">Cytoplasm</keyword>
<keyword id="KW-0413">Isomerase</keyword>
<keyword id="KW-0414">Isoprene biosynthesis</keyword>
<keyword id="KW-0460">Magnesium</keyword>
<keyword id="KW-0464">Manganese</keyword>
<keyword id="KW-0479">Metal-binding</keyword>
<keyword id="KW-0614">Plasmid</keyword>
<keyword id="KW-1185">Reference proteome</keyword>
<organism>
    <name type="scientific">Aromatoleum aromaticum (strain DSM 19018 / LMG 30748 / EbN1)</name>
    <name type="common">Azoarcus sp. (strain EbN1)</name>
    <dbReference type="NCBI Taxonomy" id="76114"/>
    <lineage>
        <taxon>Bacteria</taxon>
        <taxon>Pseudomonadati</taxon>
        <taxon>Pseudomonadota</taxon>
        <taxon>Betaproteobacteria</taxon>
        <taxon>Rhodocyclales</taxon>
        <taxon>Rhodocyclaceae</taxon>
        <taxon>Aromatoleum</taxon>
    </lineage>
</organism>
<geneLocation type="plasmid">
    <name>pAzo2</name>
</geneLocation>
<accession>Q5NWG5</accession>
<reference key="1">
    <citation type="journal article" date="2005" name="Arch. Microbiol.">
        <title>The genome sequence of an anaerobic aromatic-degrading denitrifying bacterium, strain EbN1.</title>
        <authorList>
            <person name="Rabus R."/>
            <person name="Kube M."/>
            <person name="Heider J."/>
            <person name="Beck A."/>
            <person name="Heitmann K."/>
            <person name="Widdel F."/>
            <person name="Reinhardt R."/>
        </authorList>
    </citation>
    <scope>NUCLEOTIDE SEQUENCE [LARGE SCALE GENOMIC DNA]</scope>
    <source>
        <strain>DSM 19018 / LMG 30748 / EbN1</strain>
    </source>
</reference>
<sequence>MEDQVILVDEHDNKVGFAGKMAAHQRGALHRAISIFVFDSHSRLMLQRRAAGKYHSGGLWSNTCCSHPRPNEESADAARRRLREEMGVDCELKKAFSFVYRTKFGSGLIEHEFDHVFFGNHDGRPVLNPDEADDWKWVDLTELTVDVRKRPETYSFWLAACLDRVISCRSLNGAGAAAQKIGSTITLMA</sequence>
<name>IDI2_AROAE</name>
<feature type="chain" id="PRO_0000205242" description="Isopentenyl-diphosphate Delta-isomerase 2">
    <location>
        <begin position="1"/>
        <end position="189"/>
    </location>
</feature>
<feature type="domain" description="Nudix hydrolase">
    <location>
        <begin position="28"/>
        <end position="160"/>
    </location>
</feature>
<feature type="active site" evidence="1">
    <location>
        <position position="65"/>
    </location>
</feature>
<feature type="active site" evidence="1">
    <location>
        <position position="112"/>
    </location>
</feature>
<feature type="binding site" evidence="1">
    <location>
        <position position="24"/>
    </location>
    <ligand>
        <name>Mn(2+)</name>
        <dbReference type="ChEBI" id="CHEBI:29035"/>
    </ligand>
</feature>
<feature type="binding site" evidence="1">
    <location>
        <position position="30"/>
    </location>
    <ligand>
        <name>Mn(2+)</name>
        <dbReference type="ChEBI" id="CHEBI:29035"/>
    </ligand>
</feature>
<feature type="binding site" evidence="1">
    <location>
        <position position="65"/>
    </location>
    <ligand>
        <name>Mg(2+)</name>
        <dbReference type="ChEBI" id="CHEBI:18420"/>
    </ligand>
</feature>
<feature type="binding site" evidence="1">
    <location>
        <position position="67"/>
    </location>
    <ligand>
        <name>Mn(2+)</name>
        <dbReference type="ChEBI" id="CHEBI:29035"/>
    </ligand>
</feature>
<feature type="binding site" evidence="1">
    <location>
        <position position="85"/>
    </location>
    <ligand>
        <name>Mg(2+)</name>
        <dbReference type="ChEBI" id="CHEBI:18420"/>
    </ligand>
</feature>
<feature type="binding site" evidence="1">
    <location>
        <position position="110"/>
    </location>
    <ligand>
        <name>Mn(2+)</name>
        <dbReference type="ChEBI" id="CHEBI:29035"/>
    </ligand>
</feature>
<feature type="binding site" evidence="1">
    <location>
        <position position="112"/>
    </location>
    <ligand>
        <name>Mn(2+)</name>
        <dbReference type="ChEBI" id="CHEBI:29035"/>
    </ligand>
</feature>